<organism>
    <name type="scientific">Nitrosococcus oceani (strain ATCC 19707 / BCRC 17464 / JCM 30415 / NCIMB 11848 / C-107)</name>
    <dbReference type="NCBI Taxonomy" id="323261"/>
    <lineage>
        <taxon>Bacteria</taxon>
        <taxon>Pseudomonadati</taxon>
        <taxon>Pseudomonadota</taxon>
        <taxon>Gammaproteobacteria</taxon>
        <taxon>Chromatiales</taxon>
        <taxon>Chromatiaceae</taxon>
        <taxon>Nitrosococcus</taxon>
    </lineage>
</organism>
<comment type="function">
    <text evidence="1">Involved in the biosynthesis of the chorismate, which leads to the biosynthesis of aromatic amino acids. Catalyzes the reversible NADPH linked reduction of 3-dehydroshikimate (DHSA) to yield shikimate (SA).</text>
</comment>
<comment type="catalytic activity">
    <reaction evidence="1">
        <text>shikimate + NADP(+) = 3-dehydroshikimate + NADPH + H(+)</text>
        <dbReference type="Rhea" id="RHEA:17737"/>
        <dbReference type="ChEBI" id="CHEBI:15378"/>
        <dbReference type="ChEBI" id="CHEBI:16630"/>
        <dbReference type="ChEBI" id="CHEBI:36208"/>
        <dbReference type="ChEBI" id="CHEBI:57783"/>
        <dbReference type="ChEBI" id="CHEBI:58349"/>
        <dbReference type="EC" id="1.1.1.25"/>
    </reaction>
</comment>
<comment type="pathway">
    <text evidence="1">Metabolic intermediate biosynthesis; chorismate biosynthesis; chorismate from D-erythrose 4-phosphate and phosphoenolpyruvate: step 4/7.</text>
</comment>
<comment type="subunit">
    <text evidence="1">Homodimer.</text>
</comment>
<comment type="similarity">
    <text evidence="1">Belongs to the shikimate dehydrogenase family.</text>
</comment>
<proteinExistence type="inferred from homology"/>
<reference key="1">
    <citation type="journal article" date="2006" name="Appl. Environ. Microbiol.">
        <title>Complete genome sequence of the marine, chemolithoautotrophic, ammonia-oxidizing bacterium Nitrosococcus oceani ATCC 19707.</title>
        <authorList>
            <person name="Klotz M.G."/>
            <person name="Arp D.J."/>
            <person name="Chain P.S.G."/>
            <person name="El-Sheikh A.F."/>
            <person name="Hauser L.J."/>
            <person name="Hommes N.G."/>
            <person name="Larimer F.W."/>
            <person name="Malfatti S.A."/>
            <person name="Norton J.M."/>
            <person name="Poret-Peterson A.T."/>
            <person name="Vergez L.M."/>
            <person name="Ward B.B."/>
        </authorList>
    </citation>
    <scope>NUCLEOTIDE SEQUENCE [LARGE SCALE GENOMIC DNA]</scope>
    <source>
        <strain>ATCC 19707 / BCRC 17464 / JCM 30415 / NCIMB 11848 / C-107</strain>
    </source>
</reference>
<protein>
    <recommendedName>
        <fullName evidence="1">Shikimate dehydrogenase (NADP(+))</fullName>
        <shortName evidence="1">SDH</shortName>
        <ecNumber evidence="1">1.1.1.25</ecNumber>
    </recommendedName>
</protein>
<accession>Q3J818</accession>
<evidence type="ECO:0000255" key="1">
    <source>
        <dbReference type="HAMAP-Rule" id="MF_00222"/>
    </source>
</evidence>
<sequence>MPDRYAVMGNPIAHSKSPQIHTAFAQQTGQALTYTGLQVEAGKLAEAITAFQQQEGKGLNITIPLKAEAWRLVDQCSPQAQRAKAVNTILLEKNGALLGDNTDGVGLVRDLINNHGGRITGQQVLLLGAGGAASGVIEALLKEHPSHLIIVNRTPAKAIELAARFSPFGAITGGGYELLENNSFHLIINATASSLQGELPPLPRGILRSGGWVYDMMYGNEPTIFMKWGQTHGAARSLDGLGMLVEQAAEAFFIWRKVRPKSAPIIAQLRREMDIKNPAMPL</sequence>
<keyword id="KW-0028">Amino-acid biosynthesis</keyword>
<keyword id="KW-0057">Aromatic amino acid biosynthesis</keyword>
<keyword id="KW-0521">NADP</keyword>
<keyword id="KW-0560">Oxidoreductase</keyword>
<keyword id="KW-1185">Reference proteome</keyword>
<feature type="chain" id="PRO_0000325139" description="Shikimate dehydrogenase (NADP(+))">
    <location>
        <begin position="1"/>
        <end position="282"/>
    </location>
</feature>
<feature type="active site" description="Proton acceptor" evidence="1">
    <location>
        <position position="66"/>
    </location>
</feature>
<feature type="binding site" evidence="1">
    <location>
        <begin position="15"/>
        <end position="17"/>
    </location>
    <ligand>
        <name>shikimate</name>
        <dbReference type="ChEBI" id="CHEBI:36208"/>
    </ligand>
</feature>
<feature type="binding site" evidence="1">
    <location>
        <position position="62"/>
    </location>
    <ligand>
        <name>shikimate</name>
        <dbReference type="ChEBI" id="CHEBI:36208"/>
    </ligand>
</feature>
<feature type="binding site" evidence="1">
    <location>
        <position position="87"/>
    </location>
    <ligand>
        <name>shikimate</name>
        <dbReference type="ChEBI" id="CHEBI:36208"/>
    </ligand>
</feature>
<feature type="binding site" evidence="1">
    <location>
        <position position="103"/>
    </location>
    <ligand>
        <name>shikimate</name>
        <dbReference type="ChEBI" id="CHEBI:36208"/>
    </ligand>
</feature>
<feature type="binding site" evidence="1">
    <location>
        <begin position="128"/>
        <end position="132"/>
    </location>
    <ligand>
        <name>NADP(+)</name>
        <dbReference type="ChEBI" id="CHEBI:58349"/>
    </ligand>
</feature>
<feature type="binding site" evidence="1">
    <location>
        <begin position="152"/>
        <end position="157"/>
    </location>
    <ligand>
        <name>NADP(+)</name>
        <dbReference type="ChEBI" id="CHEBI:58349"/>
    </ligand>
</feature>
<feature type="binding site" evidence="1">
    <location>
        <position position="216"/>
    </location>
    <ligand>
        <name>NADP(+)</name>
        <dbReference type="ChEBI" id="CHEBI:58349"/>
    </ligand>
</feature>
<feature type="binding site" evidence="1">
    <location>
        <position position="218"/>
    </location>
    <ligand>
        <name>shikimate</name>
        <dbReference type="ChEBI" id="CHEBI:36208"/>
    </ligand>
</feature>
<feature type="binding site" evidence="1">
    <location>
        <position position="240"/>
    </location>
    <ligand>
        <name>NADP(+)</name>
        <dbReference type="ChEBI" id="CHEBI:58349"/>
    </ligand>
</feature>
<name>AROE_NITOC</name>
<dbReference type="EC" id="1.1.1.25" evidence="1"/>
<dbReference type="EMBL" id="CP000127">
    <property type="protein sequence ID" value="ABA59028.1"/>
    <property type="molecule type" value="Genomic_DNA"/>
</dbReference>
<dbReference type="SMR" id="Q3J818"/>
<dbReference type="FunCoup" id="Q3J818">
    <property type="interactions" value="165"/>
</dbReference>
<dbReference type="STRING" id="323261.Noc_2575"/>
<dbReference type="KEGG" id="noc:Noc_2575"/>
<dbReference type="eggNOG" id="COG0169">
    <property type="taxonomic scope" value="Bacteria"/>
</dbReference>
<dbReference type="HOGENOM" id="CLU_044063_2_1_6"/>
<dbReference type="InParanoid" id="Q3J818"/>
<dbReference type="UniPathway" id="UPA00053">
    <property type="reaction ID" value="UER00087"/>
</dbReference>
<dbReference type="Proteomes" id="UP000006838">
    <property type="component" value="Chromosome"/>
</dbReference>
<dbReference type="GO" id="GO:0005829">
    <property type="term" value="C:cytosol"/>
    <property type="evidence" value="ECO:0007669"/>
    <property type="project" value="TreeGrafter"/>
</dbReference>
<dbReference type="GO" id="GO:0050661">
    <property type="term" value="F:NADP binding"/>
    <property type="evidence" value="ECO:0007669"/>
    <property type="project" value="InterPro"/>
</dbReference>
<dbReference type="GO" id="GO:0004764">
    <property type="term" value="F:shikimate 3-dehydrogenase (NADP+) activity"/>
    <property type="evidence" value="ECO:0007669"/>
    <property type="project" value="UniProtKB-UniRule"/>
</dbReference>
<dbReference type="GO" id="GO:0008652">
    <property type="term" value="P:amino acid biosynthetic process"/>
    <property type="evidence" value="ECO:0007669"/>
    <property type="project" value="UniProtKB-KW"/>
</dbReference>
<dbReference type="GO" id="GO:0009073">
    <property type="term" value="P:aromatic amino acid family biosynthetic process"/>
    <property type="evidence" value="ECO:0007669"/>
    <property type="project" value="UniProtKB-KW"/>
</dbReference>
<dbReference type="GO" id="GO:0009423">
    <property type="term" value="P:chorismate biosynthetic process"/>
    <property type="evidence" value="ECO:0007669"/>
    <property type="project" value="UniProtKB-UniRule"/>
</dbReference>
<dbReference type="GO" id="GO:0019632">
    <property type="term" value="P:shikimate metabolic process"/>
    <property type="evidence" value="ECO:0007669"/>
    <property type="project" value="InterPro"/>
</dbReference>
<dbReference type="CDD" id="cd01065">
    <property type="entry name" value="NAD_bind_Shikimate_DH"/>
    <property type="match status" value="1"/>
</dbReference>
<dbReference type="FunFam" id="3.40.50.10860:FF:000006">
    <property type="entry name" value="Shikimate dehydrogenase (NADP(+))"/>
    <property type="match status" value="1"/>
</dbReference>
<dbReference type="Gene3D" id="3.40.50.10860">
    <property type="entry name" value="Leucine Dehydrogenase, chain A, domain 1"/>
    <property type="match status" value="1"/>
</dbReference>
<dbReference type="Gene3D" id="3.40.50.720">
    <property type="entry name" value="NAD(P)-binding Rossmann-like Domain"/>
    <property type="match status" value="1"/>
</dbReference>
<dbReference type="HAMAP" id="MF_00222">
    <property type="entry name" value="Shikimate_DH_AroE"/>
    <property type="match status" value="1"/>
</dbReference>
<dbReference type="InterPro" id="IPR046346">
    <property type="entry name" value="Aminoacid_DH-like_N_sf"/>
</dbReference>
<dbReference type="InterPro" id="IPR036291">
    <property type="entry name" value="NAD(P)-bd_dom_sf"/>
</dbReference>
<dbReference type="InterPro" id="IPR041121">
    <property type="entry name" value="SDH_C"/>
</dbReference>
<dbReference type="InterPro" id="IPR011342">
    <property type="entry name" value="Shikimate_DH"/>
</dbReference>
<dbReference type="InterPro" id="IPR013708">
    <property type="entry name" value="Shikimate_DH-bd_N"/>
</dbReference>
<dbReference type="InterPro" id="IPR022893">
    <property type="entry name" value="Shikimate_DH_fam"/>
</dbReference>
<dbReference type="InterPro" id="IPR006151">
    <property type="entry name" value="Shikm_DH/Glu-tRNA_Rdtase"/>
</dbReference>
<dbReference type="NCBIfam" id="TIGR00507">
    <property type="entry name" value="aroE"/>
    <property type="match status" value="1"/>
</dbReference>
<dbReference type="NCBIfam" id="NF001310">
    <property type="entry name" value="PRK00258.1-2"/>
    <property type="match status" value="1"/>
</dbReference>
<dbReference type="PANTHER" id="PTHR21089:SF1">
    <property type="entry name" value="BIFUNCTIONAL 3-DEHYDROQUINATE DEHYDRATASE_SHIKIMATE DEHYDROGENASE, CHLOROPLASTIC"/>
    <property type="match status" value="1"/>
</dbReference>
<dbReference type="PANTHER" id="PTHR21089">
    <property type="entry name" value="SHIKIMATE DEHYDROGENASE"/>
    <property type="match status" value="1"/>
</dbReference>
<dbReference type="Pfam" id="PF18317">
    <property type="entry name" value="SDH_C"/>
    <property type="match status" value="1"/>
</dbReference>
<dbReference type="Pfam" id="PF01488">
    <property type="entry name" value="Shikimate_DH"/>
    <property type="match status" value="1"/>
</dbReference>
<dbReference type="Pfam" id="PF08501">
    <property type="entry name" value="Shikimate_dh_N"/>
    <property type="match status" value="1"/>
</dbReference>
<dbReference type="SUPFAM" id="SSF53223">
    <property type="entry name" value="Aminoacid dehydrogenase-like, N-terminal domain"/>
    <property type="match status" value="1"/>
</dbReference>
<dbReference type="SUPFAM" id="SSF51735">
    <property type="entry name" value="NAD(P)-binding Rossmann-fold domains"/>
    <property type="match status" value="1"/>
</dbReference>
<gene>
    <name evidence="1" type="primary">aroE</name>
    <name type="ordered locus">Noc_2575</name>
</gene>